<dbReference type="EMBL" id="AY362745">
    <property type="protein sequence ID" value="AAR13354.1"/>
    <property type="molecule type" value="Genomic_DNA"/>
</dbReference>
<dbReference type="RefSeq" id="NP_001074407.1">
    <property type="nucleotide sequence ID" value="NM_001080938.1"/>
</dbReference>
<dbReference type="SMR" id="Q67ES5"/>
<dbReference type="FunCoup" id="Q67ES5">
    <property type="interactions" value="80"/>
</dbReference>
<dbReference type="STRING" id="10116.ENSRNOP00000030727"/>
<dbReference type="GlyCosmos" id="Q67ES5">
    <property type="glycosylation" value="3 sites, No reported glycans"/>
</dbReference>
<dbReference type="GlyGen" id="Q67ES5">
    <property type="glycosylation" value="3 sites"/>
</dbReference>
<dbReference type="PhosphoSitePlus" id="Q67ES5"/>
<dbReference type="PaxDb" id="10116-ENSRNOP00000030727"/>
<dbReference type="Ensembl" id="ENSRNOT00000030813.3">
    <property type="protein sequence ID" value="ENSRNOP00000030727.2"/>
    <property type="gene ID" value="ENSRNOG00000021430.3"/>
</dbReference>
<dbReference type="GeneID" id="690472"/>
<dbReference type="KEGG" id="rno:690472"/>
<dbReference type="UCSC" id="RGD:1596038">
    <property type="organism name" value="rat"/>
</dbReference>
<dbReference type="AGR" id="RGD:1596038"/>
<dbReference type="CTD" id="387351"/>
<dbReference type="RGD" id="1596038">
    <property type="gene designation" value="Tas2r124"/>
</dbReference>
<dbReference type="eggNOG" id="ENOG502TE6X">
    <property type="taxonomic scope" value="Eukaryota"/>
</dbReference>
<dbReference type="GeneTree" id="ENSGT01100000263477"/>
<dbReference type="HOGENOM" id="CLU_072337_2_0_1"/>
<dbReference type="InParanoid" id="Q67ES5"/>
<dbReference type="OMA" id="ELVHIIC"/>
<dbReference type="OrthoDB" id="8876749at2759"/>
<dbReference type="PhylomeDB" id="Q67ES5"/>
<dbReference type="TreeFam" id="TF335891"/>
<dbReference type="PRO" id="PR:Q67ES5"/>
<dbReference type="Proteomes" id="UP000002494">
    <property type="component" value="Chromosome 4"/>
</dbReference>
<dbReference type="GO" id="GO:0016020">
    <property type="term" value="C:membrane"/>
    <property type="evidence" value="ECO:0000318"/>
    <property type="project" value="GO_Central"/>
</dbReference>
<dbReference type="GO" id="GO:0033038">
    <property type="term" value="F:bitter taste receptor activity"/>
    <property type="evidence" value="ECO:0000318"/>
    <property type="project" value="GO_Central"/>
</dbReference>
<dbReference type="GO" id="GO:0004930">
    <property type="term" value="F:G protein-coupled receptor activity"/>
    <property type="evidence" value="ECO:0007669"/>
    <property type="project" value="UniProtKB-KW"/>
</dbReference>
<dbReference type="GO" id="GO:0001580">
    <property type="term" value="P:detection of chemical stimulus involved in sensory perception of bitter taste"/>
    <property type="evidence" value="ECO:0000318"/>
    <property type="project" value="GO_Central"/>
</dbReference>
<dbReference type="FunFam" id="1.20.1070.10:FF:000042">
    <property type="entry name" value="Taste receptor type 2 member 7"/>
    <property type="match status" value="1"/>
</dbReference>
<dbReference type="Gene3D" id="1.20.1070.10">
    <property type="entry name" value="Rhodopsin 7-helix transmembrane proteins"/>
    <property type="match status" value="1"/>
</dbReference>
<dbReference type="InterPro" id="IPR007960">
    <property type="entry name" value="TAS2R"/>
</dbReference>
<dbReference type="PANTHER" id="PTHR11394">
    <property type="entry name" value="TASTE RECEPTOR TYPE 2"/>
    <property type="match status" value="1"/>
</dbReference>
<dbReference type="PANTHER" id="PTHR11394:SF33">
    <property type="entry name" value="TASTE RECEPTOR TYPE 2 MEMBER 124"/>
    <property type="match status" value="1"/>
</dbReference>
<dbReference type="Pfam" id="PF05296">
    <property type="entry name" value="TAS2R"/>
    <property type="match status" value="1"/>
</dbReference>
<dbReference type="SUPFAM" id="SSF81321">
    <property type="entry name" value="Family A G protein-coupled receptor-like"/>
    <property type="match status" value="1"/>
</dbReference>
<gene>
    <name evidence="1" type="primary">Tas2r124</name>
    <name type="synonym">T2r25</name>
</gene>
<feature type="chain" id="PRO_0000248482" description="Taste receptor type 2 member 124">
    <location>
        <begin position="1"/>
        <end position="309"/>
    </location>
</feature>
<feature type="topological domain" description="Extracellular" evidence="2">
    <location>
        <begin position="1"/>
        <end position="7"/>
    </location>
</feature>
<feature type="transmembrane region" description="Helical; Name=1" evidence="2">
    <location>
        <begin position="8"/>
        <end position="28"/>
    </location>
</feature>
<feature type="topological domain" description="Cytoplasmic" evidence="2">
    <location>
        <begin position="29"/>
        <end position="46"/>
    </location>
</feature>
<feature type="transmembrane region" description="Helical; Name=2" evidence="2">
    <location>
        <begin position="47"/>
        <end position="67"/>
    </location>
</feature>
<feature type="topological domain" description="Extracellular" evidence="2">
    <location>
        <begin position="68"/>
        <end position="81"/>
    </location>
</feature>
<feature type="transmembrane region" description="Helical; Name=3" evidence="2">
    <location>
        <begin position="82"/>
        <end position="102"/>
    </location>
</feature>
<feature type="topological domain" description="Cytoplasmic" evidence="2">
    <location>
        <begin position="103"/>
        <end position="127"/>
    </location>
</feature>
<feature type="transmembrane region" description="Helical; Name=4" evidence="2">
    <location>
        <begin position="128"/>
        <end position="148"/>
    </location>
</feature>
<feature type="topological domain" description="Extracellular" evidence="2">
    <location>
        <begin position="149"/>
        <end position="182"/>
    </location>
</feature>
<feature type="transmembrane region" description="Helical; Name=5" evidence="2">
    <location>
        <begin position="183"/>
        <end position="203"/>
    </location>
</feature>
<feature type="topological domain" description="Cytoplasmic" evidence="2">
    <location>
        <begin position="204"/>
        <end position="227"/>
    </location>
</feature>
<feature type="transmembrane region" description="Helical; Name=6" evidence="2">
    <location>
        <begin position="228"/>
        <end position="248"/>
    </location>
</feature>
<feature type="topological domain" description="Extracellular" evidence="2">
    <location>
        <begin position="249"/>
        <end position="261"/>
    </location>
</feature>
<feature type="transmembrane region" description="Helical; Name=7" evidence="2">
    <location>
        <begin position="262"/>
        <end position="282"/>
    </location>
</feature>
<feature type="topological domain" description="Cytoplasmic" evidence="2">
    <location>
        <begin position="283"/>
        <end position="309"/>
    </location>
</feature>
<feature type="glycosylation site" description="N-linked (GlcNAc...) asparagine" evidence="2">
    <location>
        <position position="160"/>
    </location>
</feature>
<feature type="glycosylation site" description="N-linked (GlcNAc...) asparagine" evidence="2">
    <location>
        <position position="180"/>
    </location>
</feature>
<feature type="glycosylation site" description="N-linked (GlcNAc...) asparagine" evidence="2">
    <location>
        <position position="255"/>
    </location>
</feature>
<protein>
    <recommendedName>
        <fullName>Taste receptor type 2 member 124</fullName>
        <shortName>T2R124</shortName>
    </recommendedName>
    <alternativeName>
        <fullName>Taste receptor type 2 member 25</fullName>
        <shortName>T2R25</shortName>
    </alternativeName>
</protein>
<evidence type="ECO:0000250" key="1">
    <source>
        <dbReference type="UniProtKB" id="Q7M718"/>
    </source>
</evidence>
<evidence type="ECO:0000255" key="2"/>
<evidence type="ECO:0000305" key="3"/>
<evidence type="ECO:0000312" key="4">
    <source>
        <dbReference type="EMBL" id="AAR13354.1"/>
    </source>
</evidence>
<organism>
    <name type="scientific">Rattus norvegicus</name>
    <name type="common">Rat</name>
    <dbReference type="NCBI Taxonomy" id="10116"/>
    <lineage>
        <taxon>Eukaryota</taxon>
        <taxon>Metazoa</taxon>
        <taxon>Chordata</taxon>
        <taxon>Craniata</taxon>
        <taxon>Vertebrata</taxon>
        <taxon>Euteleostomi</taxon>
        <taxon>Mammalia</taxon>
        <taxon>Eutheria</taxon>
        <taxon>Euarchontoglires</taxon>
        <taxon>Glires</taxon>
        <taxon>Rodentia</taxon>
        <taxon>Myomorpha</taxon>
        <taxon>Muroidea</taxon>
        <taxon>Muridae</taxon>
        <taxon>Murinae</taxon>
        <taxon>Rattus</taxon>
    </lineage>
</organism>
<reference evidence="4" key="1">
    <citation type="submission" date="2003-08" db="EMBL/GenBank/DDBJ databases">
        <title>Identification of new putative rat taste receptors belonging to the T2R family.</title>
        <authorList>
            <person name="Conte C."/>
            <person name="Ebeling M."/>
            <person name="Marcuz A."/>
            <person name="Andres-Barquin P.J."/>
        </authorList>
    </citation>
    <scope>NUCLEOTIDE SEQUENCE [GENOMIC DNA]</scope>
    <source>
        <strain evidence="4">Sprague-Dawley</strain>
    </source>
</reference>
<accession>Q67ES5</accession>
<proteinExistence type="inferred from homology"/>
<comment type="function">
    <text evidence="3">Putative taste receptor which may play a role in the perception of bitterness.</text>
</comment>
<comment type="subcellular location">
    <subcellularLocation>
        <location evidence="3">Membrane</location>
        <topology evidence="3">Multi-pass membrane protein</topology>
    </subcellularLocation>
</comment>
<comment type="miscellaneous">
    <text evidence="3">Several bitter taste receptors are expressed in a single taste receptor cell.</text>
</comment>
<comment type="similarity">
    <text evidence="2">Belongs to the G-protein coupled receptor T2R family.</text>
</comment>
<keyword id="KW-0297">G-protein coupled receptor</keyword>
<keyword id="KW-0325">Glycoprotein</keyword>
<keyword id="KW-0472">Membrane</keyword>
<keyword id="KW-0675">Receptor</keyword>
<keyword id="KW-1185">Reference proteome</keyword>
<keyword id="KW-0716">Sensory transduction</keyword>
<keyword id="KW-0919">Taste</keyword>
<keyword id="KW-0807">Transducer</keyword>
<keyword id="KW-0812">Transmembrane</keyword>
<keyword id="KW-1133">Transmembrane helix</keyword>
<sequence length="309" mass="35786">MVSVLHSISTIIIIAEFVWGNLSNGLIVLKNCLDWINIKELSTLDQILILLAISRISLIWETLLMWVKDKLISSITIEELKMIMFSFMLSSHFSLWLATALSTFYLFRIANCSWQIFLYLKWRLKHLIVQMLLGSVMFLIANIIQITITLEKRFYQYKGNTSVNSIQNEFALLIEMMLFNMTIFSVIPFLLALISFFLLIFSLWKHLQRMQLNSREDRDPSTKAHRNALGIMVSFLLLYTMYVLSLLISWIAQKNQSELVHIICMITSLLNPSVHSSILILGNFKLKQSSLCILRHLGCRLKSQNTPTT</sequence>
<name>TR124_RAT</name>